<dbReference type="EC" id="5.1.3.-" evidence="1 2"/>
<dbReference type="EMBL" id="U00006">
    <property type="protein sequence ID" value="AAC43179.1"/>
    <property type="molecule type" value="Genomic_DNA"/>
</dbReference>
<dbReference type="EMBL" id="U00096">
    <property type="protein sequence ID" value="AAC77046.1"/>
    <property type="molecule type" value="Genomic_DNA"/>
</dbReference>
<dbReference type="EMBL" id="AP009048">
    <property type="protein sequence ID" value="BAE78088.1"/>
    <property type="molecule type" value="Genomic_DNA"/>
</dbReference>
<dbReference type="PIR" id="D65217">
    <property type="entry name" value="D65217"/>
</dbReference>
<dbReference type="RefSeq" id="NP_418509.1">
    <property type="nucleotide sequence ID" value="NC_000913.3"/>
</dbReference>
<dbReference type="RefSeq" id="WP_001311314.1">
    <property type="nucleotide sequence ID" value="NZ_STEB01000014.1"/>
</dbReference>
<dbReference type="PDB" id="3CT7">
    <property type="method" value="X-ray"/>
    <property type="resolution" value="2.50 A"/>
    <property type="chains" value="A/B/C/D/E/F=1-231"/>
</dbReference>
<dbReference type="PDB" id="3CTL">
    <property type="method" value="X-ray"/>
    <property type="resolution" value="2.20 A"/>
    <property type="chains" value="A/B/C/D/E/F=1-231"/>
</dbReference>
<dbReference type="PDBsum" id="3CT7"/>
<dbReference type="PDBsum" id="3CTL"/>
<dbReference type="SMR" id="P32719"/>
<dbReference type="BioGRID" id="4261233">
    <property type="interactions" value="13"/>
</dbReference>
<dbReference type="FunCoup" id="P32719">
    <property type="interactions" value="58"/>
</dbReference>
<dbReference type="IntAct" id="P32719">
    <property type="interactions" value="2"/>
</dbReference>
<dbReference type="STRING" id="511145.b4085"/>
<dbReference type="PaxDb" id="511145-b4085"/>
<dbReference type="EnsemblBacteria" id="AAC77046">
    <property type="protein sequence ID" value="AAC77046"/>
    <property type="gene ID" value="b4085"/>
</dbReference>
<dbReference type="GeneID" id="948595"/>
<dbReference type="KEGG" id="ecj:JW4046"/>
<dbReference type="KEGG" id="eco:b4085"/>
<dbReference type="KEGG" id="ecoc:C3026_22085"/>
<dbReference type="PATRIC" id="fig|1411691.4.peg.2615"/>
<dbReference type="EchoBASE" id="EB1900"/>
<dbReference type="eggNOG" id="COG0036">
    <property type="taxonomic scope" value="Bacteria"/>
</dbReference>
<dbReference type="HOGENOM" id="CLU_054856_2_1_6"/>
<dbReference type="InParanoid" id="P32719"/>
<dbReference type="OMA" id="HPETANN"/>
<dbReference type="OrthoDB" id="1645589at2"/>
<dbReference type="PhylomeDB" id="P32719"/>
<dbReference type="BioCyc" id="EcoCyc:EG11957-MONOMER"/>
<dbReference type="BioCyc" id="MetaCyc:EG11957-MONOMER"/>
<dbReference type="SABIO-RK" id="P32719"/>
<dbReference type="UniPathway" id="UPA00361"/>
<dbReference type="EvolutionaryTrace" id="P32719"/>
<dbReference type="PRO" id="PR:P32719"/>
<dbReference type="Proteomes" id="UP000000625">
    <property type="component" value="Chromosome"/>
</dbReference>
<dbReference type="GO" id="GO:0005829">
    <property type="term" value="C:cytosol"/>
    <property type="evidence" value="ECO:0000318"/>
    <property type="project" value="GO_Central"/>
</dbReference>
<dbReference type="GO" id="GO:0034700">
    <property type="term" value="F:allulose 6-phosphate 3-epimerase activity"/>
    <property type="evidence" value="ECO:0000314"/>
    <property type="project" value="EcoCyc"/>
</dbReference>
<dbReference type="GO" id="GO:0004750">
    <property type="term" value="F:D-ribulose-phosphate 3-epimerase activity"/>
    <property type="evidence" value="ECO:0000318"/>
    <property type="project" value="GO_Central"/>
</dbReference>
<dbReference type="GO" id="GO:0046872">
    <property type="term" value="F:metal ion binding"/>
    <property type="evidence" value="ECO:0000314"/>
    <property type="project" value="UniProtKB"/>
</dbReference>
<dbReference type="GO" id="GO:0005975">
    <property type="term" value="P:carbohydrate metabolic process"/>
    <property type="evidence" value="ECO:0000314"/>
    <property type="project" value="UniProtKB"/>
</dbReference>
<dbReference type="GO" id="GO:0019316">
    <property type="term" value="P:D-allose catabolic process"/>
    <property type="evidence" value="ECO:0000315"/>
    <property type="project" value="EcoCyc"/>
</dbReference>
<dbReference type="GO" id="GO:0009052">
    <property type="term" value="P:pentose-phosphate shunt, non-oxidative branch"/>
    <property type="evidence" value="ECO:0000318"/>
    <property type="project" value="GO_Central"/>
</dbReference>
<dbReference type="CDD" id="cd00429">
    <property type="entry name" value="RPE"/>
    <property type="match status" value="1"/>
</dbReference>
<dbReference type="FunFam" id="3.20.20.70:FF:000172">
    <property type="entry name" value="D-allulose-6-phosphate 3-epimerase"/>
    <property type="match status" value="1"/>
</dbReference>
<dbReference type="Gene3D" id="3.20.20.70">
    <property type="entry name" value="Aldolase class I"/>
    <property type="match status" value="1"/>
</dbReference>
<dbReference type="HAMAP" id="MF_02226">
    <property type="entry name" value="AlluloseP_3_epimer"/>
    <property type="match status" value="1"/>
</dbReference>
<dbReference type="InterPro" id="IPR013785">
    <property type="entry name" value="Aldolase_TIM"/>
</dbReference>
<dbReference type="InterPro" id="IPR043677">
    <property type="entry name" value="AlluloseP_3_epimer_AlsE"/>
</dbReference>
<dbReference type="InterPro" id="IPR000056">
    <property type="entry name" value="Ribul_P_3_epim-like"/>
</dbReference>
<dbReference type="InterPro" id="IPR011060">
    <property type="entry name" value="RibuloseP-bd_barrel"/>
</dbReference>
<dbReference type="NCBIfam" id="NF004076">
    <property type="entry name" value="PRK05581.1-4"/>
    <property type="match status" value="1"/>
</dbReference>
<dbReference type="NCBIfam" id="NF007266">
    <property type="entry name" value="PRK09722.1"/>
    <property type="match status" value="1"/>
</dbReference>
<dbReference type="PANTHER" id="PTHR11749">
    <property type="entry name" value="RIBULOSE-5-PHOSPHATE-3-EPIMERASE"/>
    <property type="match status" value="1"/>
</dbReference>
<dbReference type="Pfam" id="PF00834">
    <property type="entry name" value="Ribul_P_3_epim"/>
    <property type="match status" value="1"/>
</dbReference>
<dbReference type="SUPFAM" id="SSF51366">
    <property type="entry name" value="Ribulose-phoshate binding barrel"/>
    <property type="match status" value="1"/>
</dbReference>
<dbReference type="PROSITE" id="PS01085">
    <property type="entry name" value="RIBUL_P_3_EPIMER_1"/>
    <property type="match status" value="1"/>
</dbReference>
<dbReference type="PROSITE" id="PS01086">
    <property type="entry name" value="RIBUL_P_3_EPIMER_2"/>
    <property type="match status" value="1"/>
</dbReference>
<gene>
    <name evidence="1" type="primary">alsE</name>
    <name type="synonym">yjcU</name>
    <name type="ordered locus">b4085</name>
    <name type="ordered locus">JW4046</name>
</gene>
<evidence type="ECO:0000255" key="1">
    <source>
        <dbReference type="HAMAP-Rule" id="MF_02226"/>
    </source>
</evidence>
<evidence type="ECO:0000269" key="2">
    <source>
    </source>
</evidence>
<evidence type="ECO:0000269" key="3">
    <source>
    </source>
</evidence>
<evidence type="ECO:0000305" key="4"/>
<evidence type="ECO:0007744" key="5">
    <source>
        <dbReference type="PDB" id="3CT7"/>
    </source>
</evidence>
<evidence type="ECO:0007744" key="6">
    <source>
        <dbReference type="PDB" id="3CTL"/>
    </source>
</evidence>
<evidence type="ECO:0007829" key="7">
    <source>
        <dbReference type="PDB" id="3CTL"/>
    </source>
</evidence>
<protein>
    <recommendedName>
        <fullName evidence="1">D-allulose-6-phosphate 3-epimerase</fullName>
        <ecNumber evidence="1 2">5.1.3.-</ecNumber>
    </recommendedName>
</protein>
<proteinExistence type="evidence at protein level"/>
<sequence length="231" mass="26109">MKISPSLMCMDLLKFKEQIEFIDSHADYFHIDIMDGHFVPNLTLSPFFVSQVKKLATKPLDCHLMVTRPQDYIAQLARAGADFITLHPETINGQAFRLIDEIRRHDMKVGLILNPETPVEAMKYYIHKADKITVMTVDPGFAGQPFIPEMLDKLAELKAWREREGLEYEIEVDGSCNQATYEKLMAAGADVFIVGTSGLFNHAENIDEAWRIMTAQILAAKSEVQPHAKTA</sequence>
<feature type="chain" id="PRO_0000171585" description="D-allulose-6-phosphate 3-epimerase">
    <location>
        <begin position="1"/>
        <end position="231"/>
    </location>
</feature>
<feature type="active site" description="Proton acceptor" evidence="1 2 6">
    <location>
        <position position="32"/>
    </location>
</feature>
<feature type="active site" description="Proton donor" evidence="1 2 6">
    <location>
        <position position="173"/>
    </location>
</feature>
<feature type="binding site" evidence="1 2 6">
    <location>
        <position position="6"/>
    </location>
    <ligand>
        <name>substrate</name>
    </ligand>
</feature>
<feature type="binding site" evidence="1 2 5 6">
    <location>
        <position position="30"/>
    </location>
    <ligand>
        <name>a divalent metal cation</name>
        <dbReference type="ChEBI" id="CHEBI:60240"/>
    </ligand>
</feature>
<feature type="binding site" evidence="1 2 5 6">
    <location>
        <position position="32"/>
    </location>
    <ligand>
        <name>a divalent metal cation</name>
        <dbReference type="ChEBI" id="CHEBI:60240"/>
    </ligand>
</feature>
<feature type="binding site" evidence="1 2 5 6">
    <location>
        <position position="63"/>
    </location>
    <ligand>
        <name>a divalent metal cation</name>
        <dbReference type="ChEBI" id="CHEBI:60240"/>
    </ligand>
</feature>
<feature type="binding site" evidence="1 2 6">
    <location>
        <position position="63"/>
    </location>
    <ligand>
        <name>substrate</name>
    </ligand>
</feature>
<feature type="binding site" evidence="1 2 6">
    <location>
        <begin position="140"/>
        <end position="143"/>
    </location>
    <ligand>
        <name>substrate</name>
    </ligand>
</feature>
<feature type="binding site" evidence="1 2 6">
    <location>
        <begin position="173"/>
        <end position="175"/>
    </location>
    <ligand>
        <name>substrate</name>
    </ligand>
</feature>
<feature type="binding site" evidence="1 2 5 6">
    <location>
        <position position="173"/>
    </location>
    <ligand>
        <name>a divalent metal cation</name>
        <dbReference type="ChEBI" id="CHEBI:60240"/>
    </ligand>
</feature>
<feature type="binding site" evidence="1 2 6">
    <location>
        <begin position="195"/>
        <end position="197"/>
    </location>
    <ligand>
        <name>substrate</name>
    </ligand>
</feature>
<feature type="mutagenesis site" description="Shortens the substrate-binding pocket. Slightly lower activity towards allulose 6-phosphate and increased activity towards ribulose 5-phosphate." evidence="2">
    <location>
        <position position="196"/>
    </location>
</feature>
<feature type="mutagenesis site" description="Shortens the substrate-binding pocket. Slightly lower activity towards allulose 6-phosphate and increased activity towards ribulose 5-phosphate." evidence="2">
    <location>
        <position position="197"/>
    </location>
</feature>
<feature type="mutagenesis site" description="Shortens the substrate-binding pocket. Slightly lower activity towards allulose 6-phosphate and increased activity towards ribulose 5-phosphate." evidence="2">
    <location>
        <position position="198"/>
    </location>
</feature>
<feature type="strand" evidence="7">
    <location>
        <begin position="2"/>
        <end position="6"/>
    </location>
</feature>
<feature type="helix" evidence="7">
    <location>
        <begin position="7"/>
        <end position="9"/>
    </location>
</feature>
<feature type="helix" evidence="7">
    <location>
        <begin position="12"/>
        <end position="14"/>
    </location>
</feature>
<feature type="helix" evidence="7">
    <location>
        <begin position="15"/>
        <end position="23"/>
    </location>
</feature>
<feature type="strand" evidence="7">
    <location>
        <begin position="29"/>
        <end position="34"/>
    </location>
</feature>
<feature type="strand" evidence="7">
    <location>
        <begin position="36"/>
        <end position="40"/>
    </location>
</feature>
<feature type="helix" evidence="7">
    <location>
        <begin position="46"/>
        <end position="53"/>
    </location>
</feature>
<feature type="strand" evidence="7">
    <location>
        <begin position="60"/>
        <end position="67"/>
    </location>
</feature>
<feature type="helix" evidence="7">
    <location>
        <begin position="69"/>
        <end position="71"/>
    </location>
</feature>
<feature type="helix" evidence="7">
    <location>
        <begin position="73"/>
        <end position="79"/>
    </location>
</feature>
<feature type="strand" evidence="7">
    <location>
        <begin position="82"/>
        <end position="86"/>
    </location>
</feature>
<feature type="helix" evidence="7">
    <location>
        <begin position="88"/>
        <end position="90"/>
    </location>
</feature>
<feature type="turn" evidence="7">
    <location>
        <begin position="92"/>
        <end position="94"/>
    </location>
</feature>
<feature type="helix" evidence="7">
    <location>
        <begin position="95"/>
        <end position="104"/>
    </location>
</feature>
<feature type="strand" evidence="7">
    <location>
        <begin position="108"/>
        <end position="113"/>
    </location>
</feature>
<feature type="helix" evidence="7">
    <location>
        <begin position="119"/>
        <end position="122"/>
    </location>
</feature>
<feature type="turn" evidence="7">
    <location>
        <begin position="123"/>
        <end position="125"/>
    </location>
</feature>
<feature type="helix" evidence="7">
    <location>
        <begin position="126"/>
        <end position="128"/>
    </location>
</feature>
<feature type="strand" evidence="7">
    <location>
        <begin position="130"/>
        <end position="137"/>
    </location>
</feature>
<feature type="helix" evidence="7">
    <location>
        <begin position="150"/>
        <end position="164"/>
    </location>
</feature>
<feature type="strand" evidence="7">
    <location>
        <begin position="169"/>
        <end position="174"/>
    </location>
</feature>
<feature type="turn" evidence="7">
    <location>
        <begin position="178"/>
        <end position="180"/>
    </location>
</feature>
<feature type="helix" evidence="7">
    <location>
        <begin position="181"/>
        <end position="187"/>
    </location>
</feature>
<feature type="strand" evidence="7">
    <location>
        <begin position="191"/>
        <end position="194"/>
    </location>
</feature>
<feature type="turn" evidence="7">
    <location>
        <begin position="196"/>
        <end position="199"/>
    </location>
</feature>
<feature type="helix" evidence="7">
    <location>
        <begin position="200"/>
        <end position="202"/>
    </location>
</feature>
<feature type="helix" evidence="7">
    <location>
        <begin position="206"/>
        <end position="218"/>
    </location>
</feature>
<comment type="function">
    <text evidence="1 2 3">Catalyzes the reversible epimerization of D-allulose 6-phosphate to D-fructose 6-phosphate. Can also catalyze with lower efficiency the reversible epimerization of D-ribulose 5-phosphate to D-xylulose 5-phosphate.</text>
</comment>
<comment type="catalytic activity">
    <reaction evidence="1 2">
        <text>D-allulose 6-phosphate = keto-D-fructose 6-phosphate</text>
        <dbReference type="Rhea" id="RHEA:28426"/>
        <dbReference type="ChEBI" id="CHEBI:57579"/>
        <dbReference type="ChEBI" id="CHEBI:61519"/>
    </reaction>
</comment>
<comment type="cofactor">
    <cofactor evidence="2">
        <name>Co(2+)</name>
        <dbReference type="ChEBI" id="CHEBI:48828"/>
    </cofactor>
    <cofactor evidence="2">
        <name>Mn(2+)</name>
        <dbReference type="ChEBI" id="CHEBI:29035"/>
    </cofactor>
    <cofactor evidence="2">
        <name>Zn(2+)</name>
        <dbReference type="ChEBI" id="CHEBI:29105"/>
    </cofactor>
    <text evidence="2">Binds 1 divalent metal cation per subunit. Activity is highest with Co(2+) &gt; Mn(2+) &gt; Zn(2+).</text>
</comment>
<comment type="pathway">
    <text evidence="1 2">Carbohydrate degradation; D-allose degradation.</text>
</comment>
<comment type="subunit">
    <text evidence="2">Homohexamer. Trimer of dimers.</text>
</comment>
<comment type="similarity">
    <text evidence="1 4">Belongs to the ribulose-phosphate 3-epimerase family. AlsE subfamily.</text>
</comment>
<keyword id="KW-0002">3D-structure</keyword>
<keyword id="KW-0119">Carbohydrate metabolism</keyword>
<keyword id="KW-0170">Cobalt</keyword>
<keyword id="KW-0413">Isomerase</keyword>
<keyword id="KW-0464">Manganese</keyword>
<keyword id="KW-0479">Metal-binding</keyword>
<keyword id="KW-1185">Reference proteome</keyword>
<keyword id="KW-0862">Zinc</keyword>
<reference key="1">
    <citation type="journal article" date="1993" name="Nucleic Acids Res.">
        <title>Analysis of the Escherichia coli genome. IV. DNA sequence of the region from 89.2 to 92.8 minutes.</title>
        <authorList>
            <person name="Blattner F.R."/>
            <person name="Burland V.D."/>
            <person name="Plunkett G. III"/>
            <person name="Sofia H.J."/>
            <person name="Daniels D.L."/>
        </authorList>
    </citation>
    <scope>NUCLEOTIDE SEQUENCE [LARGE SCALE GENOMIC DNA]</scope>
    <source>
        <strain>K12 / MG1655 / ATCC 47076</strain>
    </source>
</reference>
<reference key="2">
    <citation type="journal article" date="1997" name="Science">
        <title>The complete genome sequence of Escherichia coli K-12.</title>
        <authorList>
            <person name="Blattner F.R."/>
            <person name="Plunkett G. III"/>
            <person name="Bloch C.A."/>
            <person name="Perna N.T."/>
            <person name="Burland V."/>
            <person name="Riley M."/>
            <person name="Collado-Vides J."/>
            <person name="Glasner J.D."/>
            <person name="Rode C.K."/>
            <person name="Mayhew G.F."/>
            <person name="Gregor J."/>
            <person name="Davis N.W."/>
            <person name="Kirkpatrick H.A."/>
            <person name="Goeden M.A."/>
            <person name="Rose D.J."/>
            <person name="Mau B."/>
            <person name="Shao Y."/>
        </authorList>
    </citation>
    <scope>NUCLEOTIDE SEQUENCE [LARGE SCALE GENOMIC DNA]</scope>
    <source>
        <strain>K12 / MG1655 / ATCC 47076</strain>
    </source>
</reference>
<reference key="3">
    <citation type="journal article" date="2006" name="Mol. Syst. Biol.">
        <title>Highly accurate genome sequences of Escherichia coli K-12 strains MG1655 and W3110.</title>
        <authorList>
            <person name="Hayashi K."/>
            <person name="Morooka N."/>
            <person name="Yamamoto Y."/>
            <person name="Fujita K."/>
            <person name="Isono K."/>
            <person name="Choi S."/>
            <person name="Ohtsubo E."/>
            <person name="Baba T."/>
            <person name="Wanner B.L."/>
            <person name="Mori H."/>
            <person name="Horiuchi T."/>
        </authorList>
    </citation>
    <scope>NUCLEOTIDE SEQUENCE [LARGE SCALE GENOMIC DNA]</scope>
    <source>
        <strain>K12 / W3110 / ATCC 27325 / DSM 5911</strain>
    </source>
</reference>
<reference key="4">
    <citation type="journal article" date="1997" name="J. Bacteriol.">
        <title>The D-allose operon of Escherichia coli K-12.</title>
        <authorList>
            <person name="Kim C."/>
            <person name="Song S."/>
            <person name="Park C."/>
        </authorList>
    </citation>
    <scope>FUNCTION</scope>
    <source>
        <strain>K12</strain>
    </source>
</reference>
<reference key="5">
    <citation type="journal article" date="2008" name="Biochemistry">
        <title>Structural basis for substrate specificity in phosphate binding (beta/alpha)8-barrels: D-allulose 6-phosphate 3-epimerase from Escherichia coli K-12.</title>
        <authorList>
            <person name="Chan K.K."/>
            <person name="Fedorov A.A."/>
            <person name="Fedorov E.V."/>
            <person name="Almo S.C."/>
            <person name="Gerlt J.A."/>
        </authorList>
    </citation>
    <scope>X-RAY CRYSTALLOGRAPHY (2.20 ANGSTROMS) IN COMPLEX WITH MAGNESIUM IONS AND D-GLUCITOL-6-PHOSPHATE</scope>
    <scope>FUNCTION</scope>
    <scope>CATALYTIC ACTIVITY</scope>
    <scope>COFACTOR</scope>
    <scope>SUBUNIT</scope>
    <scope>MUTAGENESIS OF THR-196; SER-197 AND GLY-198</scope>
    <scope>PATHWAY</scope>
    <scope>ACTIVE SITE</scope>
</reference>
<name>ALSE_ECOLI</name>
<accession>P32719</accession>
<accession>Q2M6L8</accession>
<organism>
    <name type="scientific">Escherichia coli (strain K12)</name>
    <dbReference type="NCBI Taxonomy" id="83333"/>
    <lineage>
        <taxon>Bacteria</taxon>
        <taxon>Pseudomonadati</taxon>
        <taxon>Pseudomonadota</taxon>
        <taxon>Gammaproteobacteria</taxon>
        <taxon>Enterobacterales</taxon>
        <taxon>Enterobacteriaceae</taxon>
        <taxon>Escherichia</taxon>
    </lineage>
</organism>